<comment type="function">
    <text evidence="2">NDH shuttles electrons from NAD(P)H:plastoquinone, via FMN and iron-sulfur (Fe-S) centers, to quinones in the photosynthetic chain and possibly in a chloroplast respiratory chain. The immediate electron acceptor for the enzyme in this species is believed to be plastoquinone. Couples the redox reaction to proton translocation, and thus conserves the redox energy in a proton gradient.</text>
</comment>
<comment type="catalytic activity">
    <reaction evidence="2">
        <text>a plastoquinone + NADH + (n+1) H(+)(in) = a plastoquinol + NAD(+) + n H(+)(out)</text>
        <dbReference type="Rhea" id="RHEA:42608"/>
        <dbReference type="Rhea" id="RHEA-COMP:9561"/>
        <dbReference type="Rhea" id="RHEA-COMP:9562"/>
        <dbReference type="ChEBI" id="CHEBI:15378"/>
        <dbReference type="ChEBI" id="CHEBI:17757"/>
        <dbReference type="ChEBI" id="CHEBI:57540"/>
        <dbReference type="ChEBI" id="CHEBI:57945"/>
        <dbReference type="ChEBI" id="CHEBI:62192"/>
    </reaction>
</comment>
<comment type="catalytic activity">
    <reaction evidence="2">
        <text>a plastoquinone + NADPH + (n+1) H(+)(in) = a plastoquinol + NADP(+) + n H(+)(out)</text>
        <dbReference type="Rhea" id="RHEA:42612"/>
        <dbReference type="Rhea" id="RHEA-COMP:9561"/>
        <dbReference type="Rhea" id="RHEA-COMP:9562"/>
        <dbReference type="ChEBI" id="CHEBI:15378"/>
        <dbReference type="ChEBI" id="CHEBI:17757"/>
        <dbReference type="ChEBI" id="CHEBI:57783"/>
        <dbReference type="ChEBI" id="CHEBI:58349"/>
        <dbReference type="ChEBI" id="CHEBI:62192"/>
    </reaction>
</comment>
<comment type="subunit">
    <text evidence="2">NDH is composed of at least 16 different subunits, 5 of which are encoded in the nucleus.</text>
</comment>
<comment type="subcellular location">
    <subcellularLocation>
        <location evidence="2">Plastid</location>
        <location evidence="2">Chloroplast thylakoid membrane</location>
        <topology evidence="2">Multi-pass membrane protein</topology>
    </subcellularLocation>
</comment>
<comment type="RNA editing">
    <location>
        <position position="156" evidence="1"/>
    </location>
    <location>
        <position position="196" evidence="1"/>
    </location>
    <location>
        <position position="204" evidence="1"/>
    </location>
    <location>
        <position position="235" evidence="1"/>
    </location>
    <location>
        <position position="246" evidence="1"/>
    </location>
    <location>
        <position position="277" evidence="1"/>
    </location>
    <location>
        <position position="279" evidence="1"/>
    </location>
    <location>
        <position position="494" evidence="1"/>
    </location>
</comment>
<comment type="similarity">
    <text evidence="2">Belongs to the complex I subunit 2 family.</text>
</comment>
<feature type="chain" id="PRO_0000288690" description="NAD(P)H-quinone oxidoreductase subunit 2 A, chloroplastic">
    <location>
        <begin position="1"/>
        <end position="510"/>
    </location>
</feature>
<feature type="transmembrane region" description="Helical" evidence="2">
    <location>
        <begin position="31"/>
        <end position="51"/>
    </location>
</feature>
<feature type="transmembrane region" description="Helical" evidence="2">
    <location>
        <begin position="59"/>
        <end position="79"/>
    </location>
</feature>
<feature type="transmembrane region" description="Helical" evidence="2">
    <location>
        <begin position="99"/>
        <end position="119"/>
    </location>
</feature>
<feature type="transmembrane region" description="Helical" evidence="2">
    <location>
        <begin position="124"/>
        <end position="144"/>
    </location>
</feature>
<feature type="transmembrane region" description="Helical" evidence="2">
    <location>
        <begin position="149"/>
        <end position="169"/>
    </location>
</feature>
<feature type="transmembrane region" description="Helical" evidence="2">
    <location>
        <begin position="184"/>
        <end position="204"/>
    </location>
</feature>
<feature type="transmembrane region" description="Helical" evidence="2">
    <location>
        <begin position="229"/>
        <end position="249"/>
    </location>
</feature>
<feature type="transmembrane region" description="Helical" evidence="2">
    <location>
        <begin position="261"/>
        <end position="281"/>
    </location>
</feature>
<feature type="transmembrane region" description="Helical" evidence="2">
    <location>
        <begin position="295"/>
        <end position="315"/>
    </location>
</feature>
<feature type="transmembrane region" description="Helical" evidence="2">
    <location>
        <begin position="323"/>
        <end position="343"/>
    </location>
</feature>
<feature type="transmembrane region" description="Helical" evidence="2">
    <location>
        <begin position="354"/>
        <end position="374"/>
    </location>
</feature>
<feature type="transmembrane region" description="Helical" evidence="2">
    <location>
        <begin position="395"/>
        <end position="415"/>
    </location>
</feature>
<feature type="transmembrane region" description="Helical" evidence="2">
    <location>
        <begin position="418"/>
        <end position="438"/>
    </location>
</feature>
<feature type="transmembrane region" description="Helical" evidence="2">
    <location>
        <begin position="484"/>
        <end position="504"/>
    </location>
</feature>
<name>NU2C1_ORYSA</name>
<organism>
    <name type="scientific">Oryza sativa</name>
    <name type="common">Rice</name>
    <dbReference type="NCBI Taxonomy" id="4530"/>
    <lineage>
        <taxon>Eukaryota</taxon>
        <taxon>Viridiplantae</taxon>
        <taxon>Streptophyta</taxon>
        <taxon>Embryophyta</taxon>
        <taxon>Tracheophyta</taxon>
        <taxon>Spermatophyta</taxon>
        <taxon>Magnoliopsida</taxon>
        <taxon>Liliopsida</taxon>
        <taxon>Poales</taxon>
        <taxon>Poaceae</taxon>
        <taxon>BOP clade</taxon>
        <taxon>Oryzoideae</taxon>
        <taxon>Oryzeae</taxon>
        <taxon>Oryzinae</taxon>
        <taxon>Oryza</taxon>
    </lineage>
</organism>
<geneLocation type="chloroplast"/>
<accession>P0CD18</accession>
<accession>P0C346</accession>
<keyword id="KW-0150">Chloroplast</keyword>
<keyword id="KW-0472">Membrane</keyword>
<keyword id="KW-0520">NAD</keyword>
<keyword id="KW-0521">NADP</keyword>
<keyword id="KW-0934">Plastid</keyword>
<keyword id="KW-0618">Plastoquinone</keyword>
<keyword id="KW-0874">Quinone</keyword>
<keyword id="KW-0691">RNA editing</keyword>
<keyword id="KW-0793">Thylakoid</keyword>
<keyword id="KW-1278">Translocase</keyword>
<keyword id="KW-0812">Transmembrane</keyword>
<keyword id="KW-1133">Transmembrane helix</keyword>
<keyword id="KW-0813">Transport</keyword>
<reference key="1">
    <citation type="journal article" date="2004" name="Plant Physiol.">
        <title>A comparison of rice chloroplast genomes.</title>
        <authorList>
            <person name="Tang J."/>
            <person name="Xia H."/>
            <person name="Cao M."/>
            <person name="Zhang X."/>
            <person name="Zeng W."/>
            <person name="Hu S."/>
            <person name="Tong W."/>
            <person name="Wang J."/>
            <person name="Wang J."/>
            <person name="Yu J."/>
            <person name="Yang H."/>
            <person name="Zhu L."/>
        </authorList>
    </citation>
    <scope>NUCLEOTIDE SEQUENCE [LARGE SCALE GENOMIC DNA]</scope>
    <source>
        <strain>cv. PA64s</strain>
    </source>
</reference>
<sequence>MIWHVQNENFILDSTRIFMKAFHLLLFQGSFIFPECILIFGLILLLMIDLTSDQKDRPWFYFISSTSLVISITALLFRWREEPIISFSGNFQTNNFNEIFQFLILLCSTLCIPLSVEYIECTEMAITEFLLFVLTATLGGMFLCGANDLITIFVALECFSLCSYLLSGYTKRDLRSNEATMKYLLMGGASSSILVYGFSWLYGLSGGEIELQEIVNGLINTQMYNSPGISIALIFITVGLGFKLSLAPFHQWTPDVYEGSPTPVVAFLSVTSKVAALALATRILDIPFYFSSNEWHLLLEILAILSMILGNLLAITQTSMKRMLAYSSIGQIGYVIIGIIVGDSNDGYASMITYMLFYISMNLGTFACIVLFGLRTGTDNIRDYAGLYTKDPFLALSLALCLLSLGGLPPLAGFFGKLYLFWCGWQAGLYFLVSIGLLTSVLSIYYYLKIVKLLMTGRNQEITPYVRNYRRSPLRSNNSIELSMTVCVIASTILGISMNPILAIAQDTLF</sequence>
<protein>
    <recommendedName>
        <fullName evidence="2">NAD(P)H-quinone oxidoreductase subunit 2 A, chloroplastic</fullName>
        <ecNumber evidence="2">7.1.1.-</ecNumber>
    </recommendedName>
    <alternativeName>
        <fullName evidence="2">NAD(P)H dehydrogenase, subunit 2 A</fullName>
    </alternativeName>
    <alternativeName>
        <fullName evidence="2">NADH-plastoquinone oxidoreductase subunit 2 A</fullName>
    </alternativeName>
</protein>
<evidence type="ECO:0000250" key="1"/>
<evidence type="ECO:0000255" key="2">
    <source>
        <dbReference type="HAMAP-Rule" id="MF_00445"/>
    </source>
</evidence>
<gene>
    <name evidence="2" type="primary">ndhB1</name>
    <name type="ORF">PA208</name>
</gene>
<proteinExistence type="inferred from homology"/>
<dbReference type="EC" id="7.1.1.-" evidence="2"/>
<dbReference type="EMBL" id="AY522331">
    <property type="status" value="NOT_ANNOTATED_CDS"/>
    <property type="molecule type" value="Genomic_DNA"/>
</dbReference>
<dbReference type="SMR" id="P0CD18"/>
<dbReference type="ExpressionAtlas" id="P0CD18">
    <property type="expression patterns" value="baseline and differential"/>
</dbReference>
<dbReference type="GO" id="GO:0009535">
    <property type="term" value="C:chloroplast thylakoid membrane"/>
    <property type="evidence" value="ECO:0007669"/>
    <property type="project" value="UniProtKB-SubCell"/>
</dbReference>
<dbReference type="GO" id="GO:0008137">
    <property type="term" value="F:NADH dehydrogenase (ubiquinone) activity"/>
    <property type="evidence" value="ECO:0007669"/>
    <property type="project" value="InterPro"/>
</dbReference>
<dbReference type="GO" id="GO:0048038">
    <property type="term" value="F:quinone binding"/>
    <property type="evidence" value="ECO:0007669"/>
    <property type="project" value="UniProtKB-KW"/>
</dbReference>
<dbReference type="GO" id="GO:0042773">
    <property type="term" value="P:ATP synthesis coupled electron transport"/>
    <property type="evidence" value="ECO:0007669"/>
    <property type="project" value="InterPro"/>
</dbReference>
<dbReference type="GO" id="GO:0019684">
    <property type="term" value="P:photosynthesis, light reaction"/>
    <property type="evidence" value="ECO:0007669"/>
    <property type="project" value="UniProtKB-UniRule"/>
</dbReference>
<dbReference type="HAMAP" id="MF_00445">
    <property type="entry name" value="NDH1_NuoN_1"/>
    <property type="match status" value="1"/>
</dbReference>
<dbReference type="InterPro" id="IPR010096">
    <property type="entry name" value="NADH-Q_OxRdtase_suN/2"/>
</dbReference>
<dbReference type="InterPro" id="IPR001750">
    <property type="entry name" value="ND/Mrp_TM"/>
</dbReference>
<dbReference type="InterPro" id="IPR045693">
    <property type="entry name" value="Ndh2_N"/>
</dbReference>
<dbReference type="NCBIfam" id="TIGR01770">
    <property type="entry name" value="NDH_I_N"/>
    <property type="match status" value="1"/>
</dbReference>
<dbReference type="NCBIfam" id="NF002701">
    <property type="entry name" value="PRK02504.1"/>
    <property type="match status" value="1"/>
</dbReference>
<dbReference type="PANTHER" id="PTHR22773">
    <property type="entry name" value="NADH DEHYDROGENASE"/>
    <property type="match status" value="1"/>
</dbReference>
<dbReference type="Pfam" id="PF19530">
    <property type="entry name" value="Ndh2_N"/>
    <property type="match status" value="1"/>
</dbReference>
<dbReference type="Pfam" id="PF00361">
    <property type="entry name" value="Proton_antipo_M"/>
    <property type="match status" value="1"/>
</dbReference>
<dbReference type="PRINTS" id="PR01434">
    <property type="entry name" value="NADHDHGNASE5"/>
</dbReference>